<keyword id="KW-0903">Direct protein sequencing</keyword>
<keyword id="KW-1015">Disulfide bond</keyword>
<keyword id="KW-0333">Golgi apparatus</keyword>
<keyword id="KW-0497">Mitogen</keyword>
<keyword id="KW-1185">Reference proteome</keyword>
<keyword id="KW-0964">Secreted</keyword>
<keyword id="KW-0732">Signal</keyword>
<gene>
    <name type="primary">GKN1</name>
    <name type="synonym">AMP18</name>
</gene>
<accession>Q8HYA9</accession>
<evidence type="ECO:0000250" key="1"/>
<evidence type="ECO:0000250" key="2">
    <source>
        <dbReference type="UniProtKB" id="Q9CR36"/>
    </source>
</evidence>
<evidence type="ECO:0000250" key="3">
    <source>
        <dbReference type="UniProtKB" id="Q9NS71"/>
    </source>
</evidence>
<evidence type="ECO:0000255" key="4">
    <source>
        <dbReference type="PROSITE-ProRule" id="PRU00255"/>
    </source>
</evidence>
<evidence type="ECO:0000269" key="5">
    <source>
    </source>
</evidence>
<evidence type="ECO:0000303" key="6">
    <source>
    </source>
</evidence>
<evidence type="ECO:0000305" key="7"/>
<dbReference type="EMBL" id="AY139185">
    <property type="protein sequence ID" value="AAN75450.1"/>
    <property type="molecule type" value="mRNA"/>
</dbReference>
<dbReference type="RefSeq" id="NP_001182708.1">
    <property type="nucleotide sequence ID" value="NM_001195779.2"/>
</dbReference>
<dbReference type="RefSeq" id="XP_003481245.2">
    <property type="nucleotide sequence ID" value="XM_003481197.3"/>
</dbReference>
<dbReference type="SMR" id="Q8HYA9"/>
<dbReference type="FunCoup" id="Q8HYA9">
    <property type="interactions" value="107"/>
</dbReference>
<dbReference type="STRING" id="9823.ENSSSCP00000021568"/>
<dbReference type="PaxDb" id="9823-ENSSSCP00000021568"/>
<dbReference type="Ensembl" id="ENSSSCT00015086283.1">
    <property type="protein sequence ID" value="ENSSSCP00015035083.1"/>
    <property type="gene ID" value="ENSSSCG00015064440.1"/>
</dbReference>
<dbReference type="Ensembl" id="ENSSSCT00025053252.1">
    <property type="protein sequence ID" value="ENSSSCP00025022673.1"/>
    <property type="gene ID" value="ENSSSCG00025039204.1"/>
</dbReference>
<dbReference type="Ensembl" id="ENSSSCT00030044818.1">
    <property type="protein sequence ID" value="ENSSSCP00030020138.1"/>
    <property type="gene ID" value="ENSSSCG00030032415.1"/>
</dbReference>
<dbReference type="Ensembl" id="ENSSSCT00035082356.1">
    <property type="protein sequence ID" value="ENSSSCP00035034154.1"/>
    <property type="gene ID" value="ENSSSCG00035061301.1"/>
</dbReference>
<dbReference type="Ensembl" id="ENSSSCT00040022153.1">
    <property type="protein sequence ID" value="ENSSSCP00040009274.1"/>
    <property type="gene ID" value="ENSSSCG00040016461.1"/>
</dbReference>
<dbReference type="Ensembl" id="ENSSSCT00050051879.1">
    <property type="protein sequence ID" value="ENSSSCP00050021788.1"/>
    <property type="gene ID" value="ENSSSCG00050038456.1"/>
</dbReference>
<dbReference type="Ensembl" id="ENSSSCT00055029418.1">
    <property type="protein sequence ID" value="ENSSSCP00055023419.1"/>
    <property type="gene ID" value="ENSSSCG00055014920.1"/>
</dbReference>
<dbReference type="Ensembl" id="ENSSSCT00060041674.1">
    <property type="protein sequence ID" value="ENSSSCP00060017701.1"/>
    <property type="gene ID" value="ENSSSCG00060030827.1"/>
</dbReference>
<dbReference type="Ensembl" id="ENSSSCT00065022377.1">
    <property type="protein sequence ID" value="ENSSSCP00065009075.1"/>
    <property type="gene ID" value="ENSSSCG00065016859.1"/>
</dbReference>
<dbReference type="GeneID" id="100502561"/>
<dbReference type="KEGG" id="ssc:100502561"/>
<dbReference type="CTD" id="56287"/>
<dbReference type="eggNOG" id="ENOG502S4AB">
    <property type="taxonomic scope" value="Eukaryota"/>
</dbReference>
<dbReference type="HOGENOM" id="CLU_098684_2_0_1"/>
<dbReference type="InParanoid" id="Q8HYA9"/>
<dbReference type="OrthoDB" id="8674753at2759"/>
<dbReference type="TreeFam" id="TF335950"/>
<dbReference type="Proteomes" id="UP000008227">
    <property type="component" value="Unplaced"/>
</dbReference>
<dbReference type="Proteomes" id="UP000314985">
    <property type="component" value="Unplaced"/>
</dbReference>
<dbReference type="Proteomes" id="UP000694570">
    <property type="component" value="Unplaced"/>
</dbReference>
<dbReference type="Proteomes" id="UP000694571">
    <property type="component" value="Unplaced"/>
</dbReference>
<dbReference type="Proteomes" id="UP000694720">
    <property type="component" value="Unplaced"/>
</dbReference>
<dbReference type="Proteomes" id="UP000694722">
    <property type="component" value="Unplaced"/>
</dbReference>
<dbReference type="Proteomes" id="UP000694723">
    <property type="component" value="Unplaced"/>
</dbReference>
<dbReference type="Proteomes" id="UP000694724">
    <property type="component" value="Unplaced"/>
</dbReference>
<dbReference type="Proteomes" id="UP000694725">
    <property type="component" value="Unplaced"/>
</dbReference>
<dbReference type="Proteomes" id="UP000694726">
    <property type="component" value="Unplaced"/>
</dbReference>
<dbReference type="Proteomes" id="UP000694727">
    <property type="component" value="Unplaced"/>
</dbReference>
<dbReference type="Proteomes" id="UP000694728">
    <property type="component" value="Unplaced"/>
</dbReference>
<dbReference type="Bgee" id="ENSSSCG00000035529">
    <property type="expression patterns" value="Expressed in duodenum and 4 other cell types or tissues"/>
</dbReference>
<dbReference type="GO" id="GO:0005576">
    <property type="term" value="C:extracellular region"/>
    <property type="evidence" value="ECO:0000250"/>
    <property type="project" value="UniProtKB"/>
</dbReference>
<dbReference type="GO" id="GO:0005615">
    <property type="term" value="C:extracellular space"/>
    <property type="evidence" value="ECO:0000318"/>
    <property type="project" value="GO_Central"/>
</dbReference>
<dbReference type="GO" id="GO:0005794">
    <property type="term" value="C:Golgi apparatus"/>
    <property type="evidence" value="ECO:0007669"/>
    <property type="project" value="UniProtKB-SubCell"/>
</dbReference>
<dbReference type="GO" id="GO:0051781">
    <property type="term" value="P:positive regulation of cell division"/>
    <property type="evidence" value="ECO:0007669"/>
    <property type="project" value="UniProtKB-KW"/>
</dbReference>
<dbReference type="GO" id="GO:0042127">
    <property type="term" value="P:regulation of cell population proliferation"/>
    <property type="evidence" value="ECO:0000318"/>
    <property type="project" value="GO_Central"/>
</dbReference>
<dbReference type="FunFam" id="3.30.390.150:FF:000003">
    <property type="entry name" value="Gastrokine 1"/>
    <property type="match status" value="1"/>
</dbReference>
<dbReference type="Gene3D" id="3.30.390.150">
    <property type="match status" value="1"/>
</dbReference>
<dbReference type="InterPro" id="IPR007084">
    <property type="entry name" value="BRICHOS_dom"/>
</dbReference>
<dbReference type="InterPro" id="IPR051772">
    <property type="entry name" value="Gastrokine"/>
</dbReference>
<dbReference type="PANTHER" id="PTHR16483">
    <property type="entry name" value="GASTROKINE 1"/>
    <property type="match status" value="1"/>
</dbReference>
<dbReference type="Pfam" id="PF04089">
    <property type="entry name" value="BRICHOS"/>
    <property type="match status" value="1"/>
</dbReference>
<dbReference type="SMART" id="SM01039">
    <property type="entry name" value="BRICHOS"/>
    <property type="match status" value="1"/>
</dbReference>
<dbReference type="PROSITE" id="PS50869">
    <property type="entry name" value="BRICHOS"/>
    <property type="match status" value="1"/>
</dbReference>
<feature type="signal peptide" evidence="5">
    <location>
        <begin position="1"/>
        <end position="20"/>
    </location>
</feature>
<feature type="chain" id="PRO_0000021334" description="Gastrokine-1">
    <location>
        <begin position="21"/>
        <end position="185"/>
    </location>
</feature>
<feature type="domain" description="BRICHOS" evidence="4">
    <location>
        <begin position="54"/>
        <end position="150"/>
    </location>
</feature>
<feature type="disulfide bond" evidence="1">
    <location>
        <begin position="81"/>
        <end position="142"/>
    </location>
</feature>
<organism evidence="7">
    <name type="scientific">Sus scrofa</name>
    <name type="common">Pig</name>
    <dbReference type="NCBI Taxonomy" id="9823"/>
    <lineage>
        <taxon>Eukaryota</taxon>
        <taxon>Metazoa</taxon>
        <taxon>Chordata</taxon>
        <taxon>Craniata</taxon>
        <taxon>Vertebrata</taxon>
        <taxon>Euteleostomi</taxon>
        <taxon>Mammalia</taxon>
        <taxon>Eutheria</taxon>
        <taxon>Laurasiatheria</taxon>
        <taxon>Artiodactyla</taxon>
        <taxon>Suina</taxon>
        <taxon>Suidae</taxon>
        <taxon>Sus</taxon>
    </lineage>
</organism>
<name>GKN1_PIG</name>
<proteinExistence type="evidence at protein level"/>
<reference evidence="7" key="1">
    <citation type="journal article" date="2003" name="Am. J. Physiol.">
        <title>A novel mitogenic protein that is highly expressed in cells of the gastric antrum mucosa.</title>
        <authorList>
            <person name="Martin T.E."/>
            <person name="Powell C.T."/>
            <person name="Wang Z."/>
            <person name="Bhattacharyya S."/>
            <person name="Walsh-Reitz M.M."/>
            <person name="Agarwal K."/>
            <person name="Toback F.G."/>
        </authorList>
    </citation>
    <scope>NUCLEOTIDE SEQUENCE [MRNA]</scope>
    <scope>PROTEIN SEQUENCE OF N-TERMINUS</scope>
    <scope>FUNCTION</scope>
    <scope>TISSUE SPECIFICITY</scope>
</reference>
<protein>
    <recommendedName>
        <fullName>Gastrokine-1</fullName>
    </recommendedName>
    <alternativeName>
        <fullName>18 kDa antrum mucosa protein</fullName>
        <shortName>AMP-18</shortName>
    </alternativeName>
</protein>
<comment type="function">
    <text evidence="5 6">Has mitogenic activity and may be involved in maintaining the integrity of the gastric mucosal epithelium.</text>
</comment>
<comment type="subcellular location">
    <subcellularLocation>
        <location evidence="2">Secreted</location>
    </subcellularLocation>
    <subcellularLocation>
        <location evidence="3">Cytoplasmic granule</location>
    </subcellularLocation>
    <subcellularLocation>
        <location evidence="3">Golgi apparatus</location>
    </subcellularLocation>
    <text evidence="3">Shows abundant granular cytoplasmic staining, with perinuclear accentuation suggestive of the Golgi apparatus.</text>
</comment>
<comment type="tissue specificity">
    <text evidence="5">Highly expressed specifically in surface cells of the antrum mucosa from where it is secreted.</text>
</comment>
<comment type="similarity">
    <text evidence="7">Belongs to the gastrokine family.</text>
</comment>
<sequence>MKFTIAFAGLLGVFLTPALADYSISVNDDGNSGGSGQQSVSVNNEHNVANVDNNNGWNSWNALWDYRTGFAVTRLFEKKSCIVHKMKKEAMPSLQALDALVKEKKLQGKGPGGPPPKSLRYSVNPNRVDNLDKFGKSIVAMCKGIPTYMAEEIQGANLISYSEKCISANILWILNISFCGGIAEN</sequence>